<accession>B7MAM3</accession>
<keyword id="KW-0479">Metal-binding</keyword>
<keyword id="KW-1185">Reference proteome</keyword>
<keyword id="KW-0862">Zinc</keyword>
<dbReference type="EMBL" id="CU928161">
    <property type="protein sequence ID" value="CAR01469.1"/>
    <property type="molecule type" value="Genomic_DNA"/>
</dbReference>
<dbReference type="RefSeq" id="WP_000005042.1">
    <property type="nucleotide sequence ID" value="NC_011742.1"/>
</dbReference>
<dbReference type="SMR" id="B7MAM3"/>
<dbReference type="GeneID" id="93777334"/>
<dbReference type="KEGG" id="ecz:ECS88_0104"/>
<dbReference type="HOGENOM" id="CLU_178280_3_1_6"/>
<dbReference type="Proteomes" id="UP000000747">
    <property type="component" value="Chromosome"/>
</dbReference>
<dbReference type="GO" id="GO:0008657">
    <property type="term" value="F:DNA topoisomerase type II (double strand cut, ATP-hydrolyzing) inhibitor activity"/>
    <property type="evidence" value="ECO:0007669"/>
    <property type="project" value="UniProtKB-UniRule"/>
</dbReference>
<dbReference type="GO" id="GO:0008270">
    <property type="term" value="F:zinc ion binding"/>
    <property type="evidence" value="ECO:0007669"/>
    <property type="project" value="UniProtKB-UniRule"/>
</dbReference>
<dbReference type="GO" id="GO:0006355">
    <property type="term" value="P:regulation of DNA-templated transcription"/>
    <property type="evidence" value="ECO:0007669"/>
    <property type="project" value="InterPro"/>
</dbReference>
<dbReference type="FunFam" id="3.30.50.10:FF:000026">
    <property type="entry name" value="DNA gyrase inhibitor YacG"/>
    <property type="match status" value="1"/>
</dbReference>
<dbReference type="Gene3D" id="3.30.50.10">
    <property type="entry name" value="Erythroid Transcription Factor GATA-1, subunit A"/>
    <property type="match status" value="1"/>
</dbReference>
<dbReference type="HAMAP" id="MF_00649">
    <property type="entry name" value="DNA_gyrase_inhibitor_YacG"/>
    <property type="match status" value="1"/>
</dbReference>
<dbReference type="InterPro" id="IPR005584">
    <property type="entry name" value="DNA_gyrase_inhibitor_YacG"/>
</dbReference>
<dbReference type="InterPro" id="IPR013088">
    <property type="entry name" value="Znf_NHR/GATA"/>
</dbReference>
<dbReference type="NCBIfam" id="NF001638">
    <property type="entry name" value="PRK00418.1"/>
    <property type="match status" value="1"/>
</dbReference>
<dbReference type="PANTHER" id="PTHR36150">
    <property type="entry name" value="DNA GYRASE INHIBITOR YACG"/>
    <property type="match status" value="1"/>
</dbReference>
<dbReference type="PANTHER" id="PTHR36150:SF1">
    <property type="entry name" value="DNA GYRASE INHIBITOR YACG"/>
    <property type="match status" value="1"/>
</dbReference>
<dbReference type="Pfam" id="PF03884">
    <property type="entry name" value="YacG"/>
    <property type="match status" value="1"/>
</dbReference>
<dbReference type="SUPFAM" id="SSF57716">
    <property type="entry name" value="Glucocorticoid receptor-like (DNA-binding domain)"/>
    <property type="match status" value="1"/>
</dbReference>
<name>YACG_ECO45</name>
<proteinExistence type="inferred from homology"/>
<reference key="1">
    <citation type="journal article" date="2009" name="PLoS Genet.">
        <title>Organised genome dynamics in the Escherichia coli species results in highly diverse adaptive paths.</title>
        <authorList>
            <person name="Touchon M."/>
            <person name="Hoede C."/>
            <person name="Tenaillon O."/>
            <person name="Barbe V."/>
            <person name="Baeriswyl S."/>
            <person name="Bidet P."/>
            <person name="Bingen E."/>
            <person name="Bonacorsi S."/>
            <person name="Bouchier C."/>
            <person name="Bouvet O."/>
            <person name="Calteau A."/>
            <person name="Chiapello H."/>
            <person name="Clermont O."/>
            <person name="Cruveiller S."/>
            <person name="Danchin A."/>
            <person name="Diard M."/>
            <person name="Dossat C."/>
            <person name="Karoui M.E."/>
            <person name="Frapy E."/>
            <person name="Garry L."/>
            <person name="Ghigo J.M."/>
            <person name="Gilles A.M."/>
            <person name="Johnson J."/>
            <person name="Le Bouguenec C."/>
            <person name="Lescat M."/>
            <person name="Mangenot S."/>
            <person name="Martinez-Jehanne V."/>
            <person name="Matic I."/>
            <person name="Nassif X."/>
            <person name="Oztas S."/>
            <person name="Petit M.A."/>
            <person name="Pichon C."/>
            <person name="Rouy Z."/>
            <person name="Ruf C.S."/>
            <person name="Schneider D."/>
            <person name="Tourret J."/>
            <person name="Vacherie B."/>
            <person name="Vallenet D."/>
            <person name="Medigue C."/>
            <person name="Rocha E.P.C."/>
            <person name="Denamur E."/>
        </authorList>
    </citation>
    <scope>NUCLEOTIDE SEQUENCE [LARGE SCALE GENOMIC DNA]</scope>
    <source>
        <strain>S88 / ExPEC</strain>
    </source>
</reference>
<protein>
    <recommendedName>
        <fullName evidence="1">DNA gyrase inhibitor YacG</fullName>
    </recommendedName>
</protein>
<organism>
    <name type="scientific">Escherichia coli O45:K1 (strain S88 / ExPEC)</name>
    <dbReference type="NCBI Taxonomy" id="585035"/>
    <lineage>
        <taxon>Bacteria</taxon>
        <taxon>Pseudomonadati</taxon>
        <taxon>Pseudomonadota</taxon>
        <taxon>Gammaproteobacteria</taxon>
        <taxon>Enterobacterales</taxon>
        <taxon>Enterobacteriaceae</taxon>
        <taxon>Escherichia</taxon>
    </lineage>
</organism>
<evidence type="ECO:0000255" key="1">
    <source>
        <dbReference type="HAMAP-Rule" id="MF_00649"/>
    </source>
</evidence>
<evidence type="ECO:0000256" key="2">
    <source>
        <dbReference type="SAM" id="MobiDB-lite"/>
    </source>
</evidence>
<feature type="chain" id="PRO_1000130958" description="DNA gyrase inhibitor YacG">
    <location>
        <begin position="1"/>
        <end position="65"/>
    </location>
</feature>
<feature type="region of interest" description="Disordered" evidence="2">
    <location>
        <begin position="45"/>
        <end position="65"/>
    </location>
</feature>
<feature type="compositionally biased region" description="Acidic residues" evidence="2">
    <location>
        <begin position="54"/>
        <end position="65"/>
    </location>
</feature>
<feature type="binding site" evidence="1">
    <location>
        <position position="9"/>
    </location>
    <ligand>
        <name>Zn(2+)</name>
        <dbReference type="ChEBI" id="CHEBI:29105"/>
    </ligand>
</feature>
<feature type="binding site" evidence="1">
    <location>
        <position position="12"/>
    </location>
    <ligand>
        <name>Zn(2+)</name>
        <dbReference type="ChEBI" id="CHEBI:29105"/>
    </ligand>
</feature>
<feature type="binding site" evidence="1">
    <location>
        <position position="28"/>
    </location>
    <ligand>
        <name>Zn(2+)</name>
        <dbReference type="ChEBI" id="CHEBI:29105"/>
    </ligand>
</feature>
<feature type="binding site" evidence="1">
    <location>
        <position position="32"/>
    </location>
    <ligand>
        <name>Zn(2+)</name>
        <dbReference type="ChEBI" id="CHEBI:29105"/>
    </ligand>
</feature>
<comment type="function">
    <text evidence="1">Inhibits all the catalytic activities of DNA gyrase by preventing its interaction with DNA. Acts by binding directly to the C-terminal domain of GyrB, which probably disrupts DNA binding by the gyrase.</text>
</comment>
<comment type="cofactor">
    <cofactor evidence="1">
        <name>Zn(2+)</name>
        <dbReference type="ChEBI" id="CHEBI:29105"/>
    </cofactor>
    <text evidence="1">Binds 1 zinc ion.</text>
</comment>
<comment type="subunit">
    <text evidence="1">Interacts with GyrB.</text>
</comment>
<comment type="similarity">
    <text evidence="1">Belongs to the DNA gyrase inhibitor YacG family.</text>
</comment>
<gene>
    <name evidence="1" type="primary">yacG</name>
    <name type="ordered locus">ECS88_0104</name>
</gene>
<sequence>MSETITVNCPTCGKTVVWGEISPFRPFCSKRCQLIDLGEWAAEEKRIPSSGDLSESDDWSEEPKQ</sequence>